<dbReference type="EC" id="6.3.2.6" evidence="1"/>
<dbReference type="EMBL" id="CU928158">
    <property type="protein sequence ID" value="CAQ88242.1"/>
    <property type="molecule type" value="Genomic_DNA"/>
</dbReference>
<dbReference type="RefSeq" id="WP_001295467.1">
    <property type="nucleotide sequence ID" value="NC_011740.1"/>
</dbReference>
<dbReference type="SMR" id="B7LKG5"/>
<dbReference type="GeneID" id="89517285"/>
<dbReference type="KEGG" id="efe:EFER_0700"/>
<dbReference type="HOGENOM" id="CLU_061495_2_1_6"/>
<dbReference type="OrthoDB" id="9801549at2"/>
<dbReference type="UniPathway" id="UPA00074">
    <property type="reaction ID" value="UER00131"/>
</dbReference>
<dbReference type="Proteomes" id="UP000000745">
    <property type="component" value="Chromosome"/>
</dbReference>
<dbReference type="GO" id="GO:0005829">
    <property type="term" value="C:cytosol"/>
    <property type="evidence" value="ECO:0007669"/>
    <property type="project" value="TreeGrafter"/>
</dbReference>
<dbReference type="GO" id="GO:0005524">
    <property type="term" value="F:ATP binding"/>
    <property type="evidence" value="ECO:0007669"/>
    <property type="project" value="UniProtKB-KW"/>
</dbReference>
<dbReference type="GO" id="GO:0004639">
    <property type="term" value="F:phosphoribosylaminoimidazolesuccinocarboxamide synthase activity"/>
    <property type="evidence" value="ECO:0007669"/>
    <property type="project" value="UniProtKB-UniRule"/>
</dbReference>
<dbReference type="GO" id="GO:0006189">
    <property type="term" value="P:'de novo' IMP biosynthetic process"/>
    <property type="evidence" value="ECO:0007669"/>
    <property type="project" value="UniProtKB-UniRule"/>
</dbReference>
<dbReference type="GO" id="GO:0009236">
    <property type="term" value="P:cobalamin biosynthetic process"/>
    <property type="evidence" value="ECO:0007669"/>
    <property type="project" value="InterPro"/>
</dbReference>
<dbReference type="CDD" id="cd01415">
    <property type="entry name" value="SAICAR_synt_PurC"/>
    <property type="match status" value="1"/>
</dbReference>
<dbReference type="FunFam" id="3.30.200.20:FF:000086">
    <property type="entry name" value="Phosphoribosylaminoimidazole-succinocarboxamide synthase"/>
    <property type="match status" value="1"/>
</dbReference>
<dbReference type="FunFam" id="3.30.470.20:FF:000006">
    <property type="entry name" value="Phosphoribosylaminoimidazole-succinocarboxamide synthase"/>
    <property type="match status" value="1"/>
</dbReference>
<dbReference type="Gene3D" id="3.30.470.20">
    <property type="entry name" value="ATP-grasp fold, B domain"/>
    <property type="match status" value="1"/>
</dbReference>
<dbReference type="Gene3D" id="3.30.200.20">
    <property type="entry name" value="Phosphorylase Kinase, domain 1"/>
    <property type="match status" value="1"/>
</dbReference>
<dbReference type="HAMAP" id="MF_00137">
    <property type="entry name" value="SAICAR_synth"/>
    <property type="match status" value="1"/>
</dbReference>
<dbReference type="InterPro" id="IPR028923">
    <property type="entry name" value="SAICAR_synt/ADE2_N"/>
</dbReference>
<dbReference type="InterPro" id="IPR033934">
    <property type="entry name" value="SAICAR_synt_PurC"/>
</dbReference>
<dbReference type="InterPro" id="IPR001636">
    <property type="entry name" value="SAICAR_synth"/>
</dbReference>
<dbReference type="InterPro" id="IPR050089">
    <property type="entry name" value="SAICAR_synthetase"/>
</dbReference>
<dbReference type="InterPro" id="IPR018236">
    <property type="entry name" value="SAICAR_synthetase_CS"/>
</dbReference>
<dbReference type="NCBIfam" id="TIGR00081">
    <property type="entry name" value="purC"/>
    <property type="match status" value="1"/>
</dbReference>
<dbReference type="PANTHER" id="PTHR43599">
    <property type="entry name" value="MULTIFUNCTIONAL PROTEIN ADE2"/>
    <property type="match status" value="1"/>
</dbReference>
<dbReference type="PANTHER" id="PTHR43599:SF3">
    <property type="entry name" value="SI:DKEY-6E2.2"/>
    <property type="match status" value="1"/>
</dbReference>
<dbReference type="Pfam" id="PF01259">
    <property type="entry name" value="SAICAR_synt"/>
    <property type="match status" value="1"/>
</dbReference>
<dbReference type="SUPFAM" id="SSF56104">
    <property type="entry name" value="SAICAR synthase-like"/>
    <property type="match status" value="1"/>
</dbReference>
<dbReference type="PROSITE" id="PS01057">
    <property type="entry name" value="SAICAR_SYNTHETASE_1"/>
    <property type="match status" value="1"/>
</dbReference>
<dbReference type="PROSITE" id="PS01058">
    <property type="entry name" value="SAICAR_SYNTHETASE_2"/>
    <property type="match status" value="1"/>
</dbReference>
<reference key="1">
    <citation type="journal article" date="2009" name="PLoS Genet.">
        <title>Organised genome dynamics in the Escherichia coli species results in highly diverse adaptive paths.</title>
        <authorList>
            <person name="Touchon M."/>
            <person name="Hoede C."/>
            <person name="Tenaillon O."/>
            <person name="Barbe V."/>
            <person name="Baeriswyl S."/>
            <person name="Bidet P."/>
            <person name="Bingen E."/>
            <person name="Bonacorsi S."/>
            <person name="Bouchier C."/>
            <person name="Bouvet O."/>
            <person name="Calteau A."/>
            <person name="Chiapello H."/>
            <person name="Clermont O."/>
            <person name="Cruveiller S."/>
            <person name="Danchin A."/>
            <person name="Diard M."/>
            <person name="Dossat C."/>
            <person name="Karoui M.E."/>
            <person name="Frapy E."/>
            <person name="Garry L."/>
            <person name="Ghigo J.M."/>
            <person name="Gilles A.M."/>
            <person name="Johnson J."/>
            <person name="Le Bouguenec C."/>
            <person name="Lescat M."/>
            <person name="Mangenot S."/>
            <person name="Martinez-Jehanne V."/>
            <person name="Matic I."/>
            <person name="Nassif X."/>
            <person name="Oztas S."/>
            <person name="Petit M.A."/>
            <person name="Pichon C."/>
            <person name="Rouy Z."/>
            <person name="Ruf C.S."/>
            <person name="Schneider D."/>
            <person name="Tourret J."/>
            <person name="Vacherie B."/>
            <person name="Vallenet D."/>
            <person name="Medigue C."/>
            <person name="Rocha E.P.C."/>
            <person name="Denamur E."/>
        </authorList>
    </citation>
    <scope>NUCLEOTIDE SEQUENCE [LARGE SCALE GENOMIC DNA]</scope>
    <source>
        <strain>ATCC 35469 / DSM 13698 / BCRC 15582 / CCUG 18766 / IAM 14443 / JCM 21226 / LMG 7866 / NBRC 102419 / NCTC 12128 / CDC 0568-73</strain>
    </source>
</reference>
<organism>
    <name type="scientific">Escherichia fergusonii (strain ATCC 35469 / DSM 13698 / CCUG 18766 / IAM 14443 / JCM 21226 / LMG 7866 / NBRC 102419 / NCTC 12128 / CDC 0568-73)</name>
    <dbReference type="NCBI Taxonomy" id="585054"/>
    <lineage>
        <taxon>Bacteria</taxon>
        <taxon>Pseudomonadati</taxon>
        <taxon>Pseudomonadota</taxon>
        <taxon>Gammaproteobacteria</taxon>
        <taxon>Enterobacterales</taxon>
        <taxon>Enterobacteriaceae</taxon>
        <taxon>Escherichia</taxon>
    </lineage>
</organism>
<sequence>MQKQAELYRGKAKTVYSTENPDLLVLEFRNDTSAGDGARIEQFDRKGMVNNKFNYFIMSKLAEAGIPTQMERLLSDTECLVKKLDMVPVECVVRNRAAGSLVKRLGIEEGIELNPPLFDLFLKNDAMHDPMVNESYCETFGWVSKENLARMKELTYKANDVLKKLFDDAGLILVDFKLEFGLYKGEVVLGDEFSPDGSRLWDKETLEKMDKDRFRQSLGGLIEAYEAVARRLGVQLD</sequence>
<comment type="catalytic activity">
    <reaction evidence="1">
        <text>5-amino-1-(5-phospho-D-ribosyl)imidazole-4-carboxylate + L-aspartate + ATP = (2S)-2-[5-amino-1-(5-phospho-beta-D-ribosyl)imidazole-4-carboxamido]succinate + ADP + phosphate + 2 H(+)</text>
        <dbReference type="Rhea" id="RHEA:22628"/>
        <dbReference type="ChEBI" id="CHEBI:15378"/>
        <dbReference type="ChEBI" id="CHEBI:29991"/>
        <dbReference type="ChEBI" id="CHEBI:30616"/>
        <dbReference type="ChEBI" id="CHEBI:43474"/>
        <dbReference type="ChEBI" id="CHEBI:58443"/>
        <dbReference type="ChEBI" id="CHEBI:77657"/>
        <dbReference type="ChEBI" id="CHEBI:456216"/>
        <dbReference type="EC" id="6.3.2.6"/>
    </reaction>
</comment>
<comment type="pathway">
    <text evidence="1">Purine metabolism; IMP biosynthesis via de novo pathway; 5-amino-1-(5-phospho-D-ribosyl)imidazole-4-carboxamide from 5-amino-1-(5-phospho-D-ribosyl)imidazole-4-carboxylate: step 1/2.</text>
</comment>
<comment type="similarity">
    <text evidence="1">Belongs to the SAICAR synthetase family.</text>
</comment>
<keyword id="KW-0067">ATP-binding</keyword>
<keyword id="KW-0436">Ligase</keyword>
<keyword id="KW-0547">Nucleotide-binding</keyword>
<keyword id="KW-0658">Purine biosynthesis</keyword>
<accession>B7LKG5</accession>
<gene>
    <name evidence="1" type="primary">purC</name>
    <name type="ordered locus">EFER_0700</name>
</gene>
<proteinExistence type="inferred from homology"/>
<evidence type="ECO:0000255" key="1">
    <source>
        <dbReference type="HAMAP-Rule" id="MF_00137"/>
    </source>
</evidence>
<name>PUR7_ESCF3</name>
<feature type="chain" id="PRO_1000117836" description="Phosphoribosylaminoimidazole-succinocarboxamide synthase">
    <location>
        <begin position="1"/>
        <end position="237"/>
    </location>
</feature>
<protein>
    <recommendedName>
        <fullName evidence="1">Phosphoribosylaminoimidazole-succinocarboxamide synthase</fullName>
        <ecNumber evidence="1">6.3.2.6</ecNumber>
    </recommendedName>
    <alternativeName>
        <fullName evidence="1">SAICAR synthetase</fullName>
    </alternativeName>
</protein>